<gene>
    <name evidence="1" type="primary">queA</name>
    <name type="ordered locus">HPSH_02010</name>
</gene>
<name>QUEA_HELPS</name>
<protein>
    <recommendedName>
        <fullName evidence="1">S-adenosylmethionine:tRNA ribosyltransferase-isomerase</fullName>
        <ecNumber evidence="1">2.4.99.17</ecNumber>
    </recommendedName>
    <alternativeName>
        <fullName evidence="1">Queuosine biosynthesis protein QueA</fullName>
    </alternativeName>
</protein>
<dbReference type="EC" id="2.4.99.17" evidence="1"/>
<dbReference type="EMBL" id="CP001072">
    <property type="protein sequence ID" value="ACD47852.1"/>
    <property type="molecule type" value="Genomic_DNA"/>
</dbReference>
<dbReference type="RefSeq" id="WP_000657315.1">
    <property type="nucleotide sequence ID" value="NC_010698.2"/>
</dbReference>
<dbReference type="SMR" id="B2USM0"/>
<dbReference type="KEGG" id="hps:HPSH_02010"/>
<dbReference type="HOGENOM" id="CLU_039110_1_0_7"/>
<dbReference type="UniPathway" id="UPA00392"/>
<dbReference type="GO" id="GO:0005737">
    <property type="term" value="C:cytoplasm"/>
    <property type="evidence" value="ECO:0007669"/>
    <property type="project" value="UniProtKB-SubCell"/>
</dbReference>
<dbReference type="GO" id="GO:0051075">
    <property type="term" value="F:S-adenosylmethionine:tRNA ribosyltransferase-isomerase activity"/>
    <property type="evidence" value="ECO:0007669"/>
    <property type="project" value="UniProtKB-EC"/>
</dbReference>
<dbReference type="GO" id="GO:0008616">
    <property type="term" value="P:queuosine biosynthetic process"/>
    <property type="evidence" value="ECO:0007669"/>
    <property type="project" value="UniProtKB-UniRule"/>
</dbReference>
<dbReference type="GO" id="GO:0002099">
    <property type="term" value="P:tRNA wobble guanine modification"/>
    <property type="evidence" value="ECO:0007669"/>
    <property type="project" value="TreeGrafter"/>
</dbReference>
<dbReference type="Gene3D" id="2.40.10.240">
    <property type="entry name" value="QueA-like"/>
    <property type="match status" value="1"/>
</dbReference>
<dbReference type="Gene3D" id="3.40.1780.10">
    <property type="entry name" value="QueA-like"/>
    <property type="match status" value="1"/>
</dbReference>
<dbReference type="HAMAP" id="MF_00113">
    <property type="entry name" value="QueA"/>
    <property type="match status" value="1"/>
</dbReference>
<dbReference type="InterPro" id="IPR003699">
    <property type="entry name" value="QueA"/>
</dbReference>
<dbReference type="InterPro" id="IPR042118">
    <property type="entry name" value="QueA_dom1"/>
</dbReference>
<dbReference type="InterPro" id="IPR042119">
    <property type="entry name" value="QueA_dom2"/>
</dbReference>
<dbReference type="InterPro" id="IPR036100">
    <property type="entry name" value="QueA_sf"/>
</dbReference>
<dbReference type="NCBIfam" id="NF001140">
    <property type="entry name" value="PRK00147.1"/>
    <property type="match status" value="1"/>
</dbReference>
<dbReference type="NCBIfam" id="TIGR00113">
    <property type="entry name" value="queA"/>
    <property type="match status" value="1"/>
</dbReference>
<dbReference type="PANTHER" id="PTHR30307">
    <property type="entry name" value="S-ADENOSYLMETHIONINE:TRNA RIBOSYLTRANSFERASE-ISOMERASE"/>
    <property type="match status" value="1"/>
</dbReference>
<dbReference type="PANTHER" id="PTHR30307:SF0">
    <property type="entry name" value="S-ADENOSYLMETHIONINE:TRNA RIBOSYLTRANSFERASE-ISOMERASE"/>
    <property type="match status" value="1"/>
</dbReference>
<dbReference type="Pfam" id="PF02547">
    <property type="entry name" value="Queuosine_synth"/>
    <property type="match status" value="1"/>
</dbReference>
<dbReference type="SUPFAM" id="SSF111337">
    <property type="entry name" value="QueA-like"/>
    <property type="match status" value="1"/>
</dbReference>
<accession>B2USM0</accession>
<proteinExistence type="inferred from homology"/>
<sequence length="345" mass="39834">MKEFDLESYDYDLPKELIANYPILPKEKAKLLVYERRSQKITHTTFEHVLDFFPKNALVVLNDTKVIKARIFGSKHAFLPSKTTEVFFHRFFKDNTALTQIKGKIKVGDKIFFDAHYHAEVLELLHNGQRLIAFYGNKTPLNQANILKLLEQYGHMPLPPYIKRADESLDAHEYQSVFAKHMGAVAAPTASLHFSQNTLEKLLKDFKHAFLTLHVGAGTFLGVETKDIREHQIHTEVLRIPKKSQEILQKSQEILCIGTTALRSVEYFKRLENPNQEAFECDIFLHLANPILHVNYLLTNFHLPKSSLLMLVSAMVGLEKTKEIYQIAIEKKYRFYSYGDGMLIL</sequence>
<comment type="function">
    <text evidence="1">Transfers and isomerizes the ribose moiety from AdoMet to the 7-aminomethyl group of 7-deazaguanine (preQ1-tRNA) to give epoxyqueuosine (oQ-tRNA).</text>
</comment>
<comment type="catalytic activity">
    <reaction evidence="1">
        <text>7-aminomethyl-7-carbaguanosine(34) in tRNA + S-adenosyl-L-methionine = epoxyqueuosine(34) in tRNA + adenine + L-methionine + 2 H(+)</text>
        <dbReference type="Rhea" id="RHEA:32155"/>
        <dbReference type="Rhea" id="RHEA-COMP:10342"/>
        <dbReference type="Rhea" id="RHEA-COMP:18582"/>
        <dbReference type="ChEBI" id="CHEBI:15378"/>
        <dbReference type="ChEBI" id="CHEBI:16708"/>
        <dbReference type="ChEBI" id="CHEBI:57844"/>
        <dbReference type="ChEBI" id="CHEBI:59789"/>
        <dbReference type="ChEBI" id="CHEBI:82833"/>
        <dbReference type="ChEBI" id="CHEBI:194443"/>
        <dbReference type="EC" id="2.4.99.17"/>
    </reaction>
</comment>
<comment type="pathway">
    <text evidence="1">tRNA modification; tRNA-queuosine biosynthesis.</text>
</comment>
<comment type="subunit">
    <text evidence="1">Monomer.</text>
</comment>
<comment type="subcellular location">
    <subcellularLocation>
        <location evidence="1">Cytoplasm</location>
    </subcellularLocation>
</comment>
<comment type="similarity">
    <text evidence="1">Belongs to the QueA family.</text>
</comment>
<reference key="1">
    <citation type="submission" date="2008-05" db="EMBL/GenBank/DDBJ databases">
        <title>Genome sequence of Helicobacter pylori from the remote Amazon: traces of Asian ancestry of the first Americans.</title>
        <authorList>
            <person name="Kersulyte D."/>
            <person name="Kalia A."/>
            <person name="Gilman R.H."/>
            <person name="Berg D.E."/>
        </authorList>
    </citation>
    <scope>NUCLEOTIDE SEQUENCE [LARGE SCALE GENOMIC DNA]</scope>
    <source>
        <strain>Shi470</strain>
    </source>
</reference>
<feature type="chain" id="PRO_1000094784" description="S-adenosylmethionine:tRNA ribosyltransferase-isomerase">
    <location>
        <begin position="1"/>
        <end position="345"/>
    </location>
</feature>
<evidence type="ECO:0000255" key="1">
    <source>
        <dbReference type="HAMAP-Rule" id="MF_00113"/>
    </source>
</evidence>
<organism>
    <name type="scientific">Helicobacter pylori (strain Shi470)</name>
    <dbReference type="NCBI Taxonomy" id="512562"/>
    <lineage>
        <taxon>Bacteria</taxon>
        <taxon>Pseudomonadati</taxon>
        <taxon>Campylobacterota</taxon>
        <taxon>Epsilonproteobacteria</taxon>
        <taxon>Campylobacterales</taxon>
        <taxon>Helicobacteraceae</taxon>
        <taxon>Helicobacter</taxon>
    </lineage>
</organism>
<keyword id="KW-0963">Cytoplasm</keyword>
<keyword id="KW-0671">Queuosine biosynthesis</keyword>
<keyword id="KW-0949">S-adenosyl-L-methionine</keyword>
<keyword id="KW-0808">Transferase</keyword>